<dbReference type="EC" id="2.1.3.15" evidence="1"/>
<dbReference type="EMBL" id="CP000142">
    <property type="protein sequence ID" value="ABA87996.1"/>
    <property type="molecule type" value="Genomic_DNA"/>
</dbReference>
<dbReference type="RefSeq" id="WP_011340439.1">
    <property type="nucleotide sequence ID" value="NC_007498.2"/>
</dbReference>
<dbReference type="SMR" id="Q3A6L1"/>
<dbReference type="STRING" id="338963.Pcar_0737"/>
<dbReference type="KEGG" id="pca:Pcar_0737"/>
<dbReference type="eggNOG" id="COG0777">
    <property type="taxonomic scope" value="Bacteria"/>
</dbReference>
<dbReference type="HOGENOM" id="CLU_015486_1_0_7"/>
<dbReference type="OrthoDB" id="9772975at2"/>
<dbReference type="UniPathway" id="UPA00655">
    <property type="reaction ID" value="UER00711"/>
</dbReference>
<dbReference type="Proteomes" id="UP000002534">
    <property type="component" value="Chromosome"/>
</dbReference>
<dbReference type="GO" id="GO:0009329">
    <property type="term" value="C:acetate CoA-transferase complex"/>
    <property type="evidence" value="ECO:0007669"/>
    <property type="project" value="TreeGrafter"/>
</dbReference>
<dbReference type="GO" id="GO:0003989">
    <property type="term" value="F:acetyl-CoA carboxylase activity"/>
    <property type="evidence" value="ECO:0007669"/>
    <property type="project" value="InterPro"/>
</dbReference>
<dbReference type="GO" id="GO:0005524">
    <property type="term" value="F:ATP binding"/>
    <property type="evidence" value="ECO:0007669"/>
    <property type="project" value="UniProtKB-KW"/>
</dbReference>
<dbReference type="GO" id="GO:0016743">
    <property type="term" value="F:carboxyl- or carbamoyltransferase activity"/>
    <property type="evidence" value="ECO:0007669"/>
    <property type="project" value="UniProtKB-UniRule"/>
</dbReference>
<dbReference type="GO" id="GO:0008270">
    <property type="term" value="F:zinc ion binding"/>
    <property type="evidence" value="ECO:0007669"/>
    <property type="project" value="UniProtKB-UniRule"/>
</dbReference>
<dbReference type="GO" id="GO:0006633">
    <property type="term" value="P:fatty acid biosynthetic process"/>
    <property type="evidence" value="ECO:0007669"/>
    <property type="project" value="UniProtKB-KW"/>
</dbReference>
<dbReference type="GO" id="GO:2001295">
    <property type="term" value="P:malonyl-CoA biosynthetic process"/>
    <property type="evidence" value="ECO:0007669"/>
    <property type="project" value="UniProtKB-UniRule"/>
</dbReference>
<dbReference type="Gene3D" id="3.90.226.10">
    <property type="entry name" value="2-enoyl-CoA Hydratase, Chain A, domain 1"/>
    <property type="match status" value="1"/>
</dbReference>
<dbReference type="HAMAP" id="MF_01395">
    <property type="entry name" value="AcetylCoA_CT_beta"/>
    <property type="match status" value="1"/>
</dbReference>
<dbReference type="InterPro" id="IPR034733">
    <property type="entry name" value="AcCoA_carboxyl_beta"/>
</dbReference>
<dbReference type="InterPro" id="IPR000438">
    <property type="entry name" value="Acetyl_CoA_COase_Trfase_b_su"/>
</dbReference>
<dbReference type="InterPro" id="IPR029045">
    <property type="entry name" value="ClpP/crotonase-like_dom_sf"/>
</dbReference>
<dbReference type="InterPro" id="IPR011762">
    <property type="entry name" value="COA_CT_N"/>
</dbReference>
<dbReference type="InterPro" id="IPR041010">
    <property type="entry name" value="Znf-ACC"/>
</dbReference>
<dbReference type="NCBIfam" id="TIGR00515">
    <property type="entry name" value="accD"/>
    <property type="match status" value="1"/>
</dbReference>
<dbReference type="PANTHER" id="PTHR42995">
    <property type="entry name" value="ACETYL-COENZYME A CARBOXYLASE CARBOXYL TRANSFERASE SUBUNIT BETA, CHLOROPLASTIC"/>
    <property type="match status" value="1"/>
</dbReference>
<dbReference type="PANTHER" id="PTHR42995:SF5">
    <property type="entry name" value="ACETYL-COENZYME A CARBOXYLASE CARBOXYL TRANSFERASE SUBUNIT BETA, CHLOROPLASTIC"/>
    <property type="match status" value="1"/>
</dbReference>
<dbReference type="Pfam" id="PF01039">
    <property type="entry name" value="Carboxyl_trans"/>
    <property type="match status" value="1"/>
</dbReference>
<dbReference type="Pfam" id="PF17848">
    <property type="entry name" value="Zn_ribbon_ACC"/>
    <property type="match status" value="1"/>
</dbReference>
<dbReference type="PRINTS" id="PR01070">
    <property type="entry name" value="ACCCTRFRASEB"/>
</dbReference>
<dbReference type="SUPFAM" id="SSF52096">
    <property type="entry name" value="ClpP/crotonase"/>
    <property type="match status" value="1"/>
</dbReference>
<dbReference type="PROSITE" id="PS50980">
    <property type="entry name" value="COA_CT_NTER"/>
    <property type="match status" value="1"/>
</dbReference>
<reference key="1">
    <citation type="submission" date="2005-10" db="EMBL/GenBank/DDBJ databases">
        <title>Complete sequence of Pelobacter carbinolicus DSM 2380.</title>
        <authorList>
            <person name="Copeland A."/>
            <person name="Lucas S."/>
            <person name="Lapidus A."/>
            <person name="Barry K."/>
            <person name="Detter J.C."/>
            <person name="Glavina T."/>
            <person name="Hammon N."/>
            <person name="Israni S."/>
            <person name="Pitluck S."/>
            <person name="Chertkov O."/>
            <person name="Schmutz J."/>
            <person name="Larimer F."/>
            <person name="Land M."/>
            <person name="Kyrpides N."/>
            <person name="Ivanova N."/>
            <person name="Richardson P."/>
        </authorList>
    </citation>
    <scope>NUCLEOTIDE SEQUENCE [LARGE SCALE GENOMIC DNA]</scope>
    <source>
        <strain>DSM 2380 / NBRC 103641 / GraBd1</strain>
    </source>
</reference>
<proteinExistence type="inferred from homology"/>
<feature type="chain" id="PRO_0000389814" description="Acetyl-coenzyme A carboxylase carboxyl transferase subunit beta">
    <location>
        <begin position="1"/>
        <end position="282"/>
    </location>
</feature>
<feature type="domain" description="CoA carboxyltransferase N-terminal" evidence="2">
    <location>
        <begin position="25"/>
        <end position="282"/>
    </location>
</feature>
<feature type="zinc finger region" description="C4-type" evidence="1">
    <location>
        <begin position="29"/>
        <end position="51"/>
    </location>
</feature>
<feature type="binding site" evidence="1">
    <location>
        <position position="29"/>
    </location>
    <ligand>
        <name>Zn(2+)</name>
        <dbReference type="ChEBI" id="CHEBI:29105"/>
    </ligand>
</feature>
<feature type="binding site" evidence="1">
    <location>
        <position position="32"/>
    </location>
    <ligand>
        <name>Zn(2+)</name>
        <dbReference type="ChEBI" id="CHEBI:29105"/>
    </ligand>
</feature>
<feature type="binding site" evidence="1">
    <location>
        <position position="48"/>
    </location>
    <ligand>
        <name>Zn(2+)</name>
        <dbReference type="ChEBI" id="CHEBI:29105"/>
    </ligand>
</feature>
<feature type="binding site" evidence="1">
    <location>
        <position position="51"/>
    </location>
    <ligand>
        <name>Zn(2+)</name>
        <dbReference type="ChEBI" id="CHEBI:29105"/>
    </ligand>
</feature>
<comment type="function">
    <text evidence="1">Component of the acetyl coenzyme A carboxylase (ACC) complex. Biotin carboxylase (BC) catalyzes the carboxylation of biotin on its carrier protein (BCCP) and then the CO(2) group is transferred by the transcarboxylase to acetyl-CoA to form malonyl-CoA.</text>
</comment>
<comment type="catalytic activity">
    <reaction evidence="1">
        <text>N(6)-carboxybiotinyl-L-lysyl-[protein] + acetyl-CoA = N(6)-biotinyl-L-lysyl-[protein] + malonyl-CoA</text>
        <dbReference type="Rhea" id="RHEA:54728"/>
        <dbReference type="Rhea" id="RHEA-COMP:10505"/>
        <dbReference type="Rhea" id="RHEA-COMP:10506"/>
        <dbReference type="ChEBI" id="CHEBI:57288"/>
        <dbReference type="ChEBI" id="CHEBI:57384"/>
        <dbReference type="ChEBI" id="CHEBI:83144"/>
        <dbReference type="ChEBI" id="CHEBI:83145"/>
        <dbReference type="EC" id="2.1.3.15"/>
    </reaction>
</comment>
<comment type="cofactor">
    <cofactor evidence="1">
        <name>Zn(2+)</name>
        <dbReference type="ChEBI" id="CHEBI:29105"/>
    </cofactor>
    <text evidence="1">Binds 1 zinc ion per subunit.</text>
</comment>
<comment type="pathway">
    <text evidence="1">Lipid metabolism; malonyl-CoA biosynthesis; malonyl-CoA from acetyl-CoA: step 1/1.</text>
</comment>
<comment type="subunit">
    <text evidence="1">Acetyl-CoA carboxylase is a heterohexamer composed of biotin carboxyl carrier protein (AccB), biotin carboxylase (AccC) and two subunits each of ACCase subunit alpha (AccA) and ACCase subunit beta (AccD).</text>
</comment>
<comment type="subcellular location">
    <subcellularLocation>
        <location evidence="1">Cytoplasm</location>
    </subcellularLocation>
</comment>
<comment type="similarity">
    <text evidence="1">Belongs to the AccD/PCCB family.</text>
</comment>
<accession>Q3A6L1</accession>
<gene>
    <name evidence="1" type="primary">accD</name>
    <name type="ordered locus">Pcar_0737</name>
</gene>
<protein>
    <recommendedName>
        <fullName evidence="1">Acetyl-coenzyme A carboxylase carboxyl transferase subunit beta</fullName>
        <shortName evidence="1">ACCase subunit beta</shortName>
        <shortName evidence="1">Acetyl-CoA carboxylase carboxyltransferase subunit beta</shortName>
        <ecNumber evidence="1">2.1.3.15</ecNumber>
    </recommendedName>
</protein>
<evidence type="ECO:0000255" key="1">
    <source>
        <dbReference type="HAMAP-Rule" id="MF_01395"/>
    </source>
</evidence>
<evidence type="ECO:0000255" key="2">
    <source>
        <dbReference type="PROSITE-ProRule" id="PRU01136"/>
    </source>
</evidence>
<sequence length="282" mass="31510">MAWFKKSKAPIVPVESKKVKMPEGVWRKCPHCNEIIYAKEIERNLNVCPKCDYHFRISARERIALVLDEGSFVERDAGMKSVDFLEFKDGKRYRDRISAAIKKSGLNDAVIWGEGAIEAQPVVVAVFDFSFMGGSMGSVVGEKITRAVEKALENRCPCLVFSSSGGARMQESIMSLMQMAKTSAALSRLKEAGLPYISIMTDPTTGGVTASFAMLGDVNMAEPRALIGFAGPRVIEQTIRQKLPEGFQRSEYLLEHGMIDMIVRRPEMKARLSQMLRIFMKQ</sequence>
<organism>
    <name type="scientific">Syntrophotalea carbinolica (strain DSM 2380 / NBRC 103641 / GraBd1)</name>
    <name type="common">Pelobacter carbinolicus</name>
    <dbReference type="NCBI Taxonomy" id="338963"/>
    <lineage>
        <taxon>Bacteria</taxon>
        <taxon>Pseudomonadati</taxon>
        <taxon>Thermodesulfobacteriota</taxon>
        <taxon>Desulfuromonadia</taxon>
        <taxon>Desulfuromonadales</taxon>
        <taxon>Syntrophotaleaceae</taxon>
        <taxon>Syntrophotalea</taxon>
    </lineage>
</organism>
<name>ACCD_SYNC1</name>
<keyword id="KW-0067">ATP-binding</keyword>
<keyword id="KW-0963">Cytoplasm</keyword>
<keyword id="KW-0275">Fatty acid biosynthesis</keyword>
<keyword id="KW-0276">Fatty acid metabolism</keyword>
<keyword id="KW-0444">Lipid biosynthesis</keyword>
<keyword id="KW-0443">Lipid metabolism</keyword>
<keyword id="KW-0479">Metal-binding</keyword>
<keyword id="KW-0547">Nucleotide-binding</keyword>
<keyword id="KW-1185">Reference proteome</keyword>
<keyword id="KW-0808">Transferase</keyword>
<keyword id="KW-0862">Zinc</keyword>
<keyword id="KW-0863">Zinc-finger</keyword>